<organism>
    <name type="scientific">Conus abbreviatus</name>
    <name type="common">Abbreviated cone</name>
    <name type="synonym">Miliariconus abbreviatus</name>
    <dbReference type="NCBI Taxonomy" id="100123"/>
    <lineage>
        <taxon>Eukaryota</taxon>
        <taxon>Metazoa</taxon>
        <taxon>Spiralia</taxon>
        <taxon>Lophotrochozoa</taxon>
        <taxon>Mollusca</taxon>
        <taxon>Gastropoda</taxon>
        <taxon>Caenogastropoda</taxon>
        <taxon>Neogastropoda</taxon>
        <taxon>Conoidea</taxon>
        <taxon>Conidae</taxon>
        <taxon>Conus</taxon>
        <taxon>Virroconus</taxon>
    </lineage>
</organism>
<sequence>VLIIAVLFLTACQLTTAVTSSRGEQKHRALRSTDKKFKVALLCSPPGSYCFGPAACCSNFCSTLSDVCQESWSG</sequence>
<protein>
    <recommendedName>
        <fullName>Conotoxin AbVIA</fullName>
    </recommendedName>
</protein>
<comment type="subcellular location">
    <subcellularLocation>
        <location evidence="1">Secreted</location>
    </subcellularLocation>
</comment>
<comment type="tissue specificity">
    <text>Expressed by the venom duct.</text>
</comment>
<comment type="domain">
    <text evidence="1">The presence of a 'disulfide through disulfide knot' structurally defines this protein as a knottin.</text>
</comment>
<comment type="domain">
    <text>The cysteine framework is VI/VII (C-C-CC-C-C).</text>
</comment>
<comment type="similarity">
    <text evidence="3">Belongs to the conotoxin O1 superfamily.</text>
</comment>
<keyword id="KW-0027">Amidation</keyword>
<keyword id="KW-1015">Disulfide bond</keyword>
<keyword id="KW-0960">Knottin</keyword>
<keyword id="KW-0964">Secreted</keyword>
<keyword id="KW-0732">Signal</keyword>
<keyword id="KW-0800">Toxin</keyword>
<name>O16A_CONAB</name>
<proteinExistence type="evidence at transcript level"/>
<accession>Q9TVY1</accession>
<accession>Q9UA76</accession>
<accession>Q9UA77</accession>
<accession>Q9UA78</accession>
<feature type="signal peptide" evidence="2">
    <location>
        <begin position="1" status="less than"/>
        <end position="17"/>
    </location>
</feature>
<feature type="propeptide" id="PRO_0000392110" evidence="3">
    <location>
        <begin position="18"/>
        <end position="38"/>
    </location>
</feature>
<feature type="peptide" id="PRO_0000392111" description="Conotoxin AbVIA">
    <location>
        <begin position="39"/>
        <end position="73"/>
    </location>
</feature>
<feature type="modified residue" description="Serine amide" evidence="1">
    <location>
        <position position="73"/>
    </location>
</feature>
<feature type="disulfide bond" evidence="1">
    <location>
        <begin position="43"/>
        <end position="57"/>
    </location>
</feature>
<feature type="disulfide bond" evidence="1">
    <location>
        <begin position="50"/>
        <end position="61"/>
    </location>
</feature>
<feature type="disulfide bond" evidence="1">
    <location>
        <begin position="56"/>
        <end position="68"/>
    </location>
</feature>
<feature type="sequence conflict" description="In Ref. 1 and 2; AAD48306." evidence="3" ref="1 2">
    <original>V</original>
    <variation>E</variation>
    <location>
        <position position="18"/>
    </location>
</feature>
<feature type="sequence conflict" description="In Ref. 1 and 2; AAD48304." evidence="3" ref="1 2">
    <original>T</original>
    <variation>A</variation>
    <location>
        <position position="19"/>
    </location>
</feature>
<feature type="sequence conflict" description="In Ref. 1 and 2; AAD48306." evidence="3" ref="1 2">
    <original>E</original>
    <variation>K</variation>
    <location>
        <position position="24"/>
    </location>
</feature>
<feature type="sequence conflict" description="In Ref. 1 and 2; AAD48303." evidence="3" ref="1 2">
    <original>S</original>
    <variation>T</variation>
    <location>
        <position position="62"/>
    </location>
</feature>
<feature type="non-terminal residue">
    <location>
        <position position="1"/>
    </location>
</feature>
<dbReference type="EMBL" id="AF090041">
    <property type="protein sequence ID" value="AAD48294.1"/>
    <property type="molecule type" value="mRNA"/>
</dbReference>
<dbReference type="EMBL" id="AF090042">
    <property type="protein sequence ID" value="AAD48295.1"/>
    <property type="molecule type" value="mRNA"/>
</dbReference>
<dbReference type="EMBL" id="AF090043">
    <property type="protein sequence ID" value="AAD48296.1"/>
    <property type="molecule type" value="mRNA"/>
</dbReference>
<dbReference type="EMBL" id="AF090044">
    <property type="protein sequence ID" value="AAD48297.1"/>
    <property type="molecule type" value="mRNA"/>
</dbReference>
<dbReference type="EMBL" id="AF090045">
    <property type="protein sequence ID" value="AAD48298.1"/>
    <property type="molecule type" value="mRNA"/>
</dbReference>
<dbReference type="EMBL" id="AF090046">
    <property type="protein sequence ID" value="AAD48299.1"/>
    <property type="molecule type" value="mRNA"/>
</dbReference>
<dbReference type="EMBL" id="AF090047">
    <property type="protein sequence ID" value="AAD48300.1"/>
    <property type="molecule type" value="mRNA"/>
</dbReference>
<dbReference type="EMBL" id="AF090048">
    <property type="protein sequence ID" value="AAD48301.1"/>
    <property type="molecule type" value="mRNA"/>
</dbReference>
<dbReference type="EMBL" id="AF090050">
    <property type="protein sequence ID" value="AAD48303.1"/>
    <property type="molecule type" value="mRNA"/>
</dbReference>
<dbReference type="EMBL" id="AF090051">
    <property type="protein sequence ID" value="AAD48304.1"/>
    <property type="molecule type" value="mRNA"/>
</dbReference>
<dbReference type="EMBL" id="AF090052">
    <property type="protein sequence ID" value="AAD48305.1"/>
    <property type="molecule type" value="mRNA"/>
</dbReference>
<dbReference type="EMBL" id="AF090053">
    <property type="protein sequence ID" value="AAD48306.1"/>
    <property type="molecule type" value="mRNA"/>
</dbReference>
<dbReference type="EMBL" id="AF090054">
    <property type="protein sequence ID" value="AAD48307.1"/>
    <property type="molecule type" value="mRNA"/>
</dbReference>
<dbReference type="EMBL" id="AF090073">
    <property type="protein sequence ID" value="AAD48326.1"/>
    <property type="molecule type" value="mRNA"/>
</dbReference>
<dbReference type="ConoServer" id="1016">
    <property type="toxin name" value="ABVIA precursor"/>
</dbReference>
<dbReference type="ConoServer" id="1025">
    <property type="toxin name" value="ABVIA precursor"/>
</dbReference>
<dbReference type="ConoServer" id="1026">
    <property type="toxin name" value="ABVIA precursor"/>
</dbReference>
<dbReference type="ConoServer" id="1028">
    <property type="toxin name" value="ABVIA precursor"/>
</dbReference>
<dbReference type="GO" id="GO:0005576">
    <property type="term" value="C:extracellular region"/>
    <property type="evidence" value="ECO:0007669"/>
    <property type="project" value="UniProtKB-SubCell"/>
</dbReference>
<dbReference type="GO" id="GO:0008200">
    <property type="term" value="F:ion channel inhibitor activity"/>
    <property type="evidence" value="ECO:0007669"/>
    <property type="project" value="InterPro"/>
</dbReference>
<dbReference type="GO" id="GO:0090729">
    <property type="term" value="F:toxin activity"/>
    <property type="evidence" value="ECO:0007669"/>
    <property type="project" value="UniProtKB-KW"/>
</dbReference>
<dbReference type="InterPro" id="IPR004214">
    <property type="entry name" value="Conotoxin"/>
</dbReference>
<dbReference type="Pfam" id="PF02950">
    <property type="entry name" value="Conotoxin"/>
    <property type="match status" value="1"/>
</dbReference>
<evidence type="ECO:0000250" key="1"/>
<evidence type="ECO:0000255" key="2"/>
<evidence type="ECO:0000305" key="3"/>
<reference key="1">
    <citation type="journal article" date="1999" name="Proc. Natl. Acad. Sci. U.S.A.">
        <title>Molecular genetics of ecological diversification: duplication and rapid evolution of toxin genes of the venomous gastropod Conus.</title>
        <authorList>
            <person name="Duda T.F. Jr."/>
            <person name="Palumbi S.R."/>
        </authorList>
    </citation>
    <scope>NUCLEOTIDE SEQUENCE [MRNA]</scope>
    <source>
        <tissue>Venom duct</tissue>
    </source>
</reference>
<reference key="2">
    <citation type="journal article" date="2004" name="Proc. R. Soc. B">
        <title>Gene expression and feeding ecology: evolution of piscivory in the venomous gastropod genus Conus.</title>
        <authorList>
            <person name="Duda T.F. Jr."/>
            <person name="Palumbi S.R."/>
        </authorList>
    </citation>
    <scope>NUCLEOTIDE SEQUENCE [MRNA]</scope>
    <source>
        <tissue>Venom duct</tissue>
    </source>
</reference>